<protein>
    <recommendedName>
        <fullName>Mitochondrial outer membrane protein porin of 36 kDa</fullName>
    </recommendedName>
    <alternativeName>
        <fullName>POM 36</fullName>
    </alternativeName>
    <alternativeName>
        <fullName>Voltage-dependent anion-selective channel protein</fullName>
        <shortName>VDAC</shortName>
    </alternativeName>
</protein>
<keyword id="KW-0903">Direct protein sequencing</keyword>
<keyword id="KW-0406">Ion transport</keyword>
<keyword id="KW-0472">Membrane</keyword>
<keyword id="KW-0496">Mitochondrion</keyword>
<keyword id="KW-1000">Mitochondrion outer membrane</keyword>
<keyword id="KW-0626">Porin</keyword>
<keyword id="KW-1185">Reference proteome</keyword>
<keyword id="KW-0812">Transmembrane</keyword>
<keyword id="KW-1134">Transmembrane beta strand</keyword>
<keyword id="KW-0813">Transport</keyword>
<proteinExistence type="evidence at protein level"/>
<sequence length="276" mass="29394">MVKGPGLYSDIGKKARDLLYRDYVSDHKFTVTTYSTTGVAITASGLKKGELFLADVSTQLKNKNITTDVKVDTNSNVYTTITVDEPAPGLKTIFSFVVPDQKSGKVELQYLHEYAGINTSIGLTASPLVNFSGVAGNNTVALGTDLSFDTATGNFTKCNAGLSFSSSDLIASLALNDKGDTVSASYYHTVKPVTNTAVGAELTHSFSSNENTLTIGTQHLLDPLTTVKARVNSYGKASALIQHEWRPKSLFTISGEVDTRAIEKSAKIGLAVALKP</sequence>
<name>VDAC2_SOLTU</name>
<dbReference type="EMBL" id="X80387">
    <property type="protein sequence ID" value="CAA56600.1"/>
    <property type="molecule type" value="mRNA"/>
</dbReference>
<dbReference type="EMBL" id="X80388">
    <property type="protein sequence ID" value="CAA56601.1"/>
    <property type="molecule type" value="mRNA"/>
</dbReference>
<dbReference type="PIR" id="C55364">
    <property type="entry name" value="C55364"/>
</dbReference>
<dbReference type="PIR" id="S46959">
    <property type="entry name" value="S46959"/>
</dbReference>
<dbReference type="RefSeq" id="NP_001275134.1">
    <property type="nucleotide sequence ID" value="NM_001288205.1"/>
</dbReference>
<dbReference type="SMR" id="P42056"/>
<dbReference type="FunCoup" id="P42056">
    <property type="interactions" value="2609"/>
</dbReference>
<dbReference type="IntAct" id="P42056">
    <property type="interactions" value="1"/>
</dbReference>
<dbReference type="STRING" id="4113.P42056"/>
<dbReference type="CarbonylDB" id="P42056"/>
<dbReference type="PaxDb" id="4113-PGSC0003DMT400002261"/>
<dbReference type="EnsemblPlants" id="PGSC0003DMT400002261">
    <property type="protein sequence ID" value="PGSC0003DMT400002261"/>
    <property type="gene ID" value="PGSC0003DMG400000864"/>
</dbReference>
<dbReference type="GeneID" id="102603136"/>
<dbReference type="Gramene" id="PGSC0003DMT400002261">
    <property type="protein sequence ID" value="PGSC0003DMT400002261"/>
    <property type="gene ID" value="PGSC0003DMG400000864"/>
</dbReference>
<dbReference type="KEGG" id="sot:102603136"/>
<dbReference type="eggNOG" id="KOG3126">
    <property type="taxonomic scope" value="Eukaryota"/>
</dbReference>
<dbReference type="HOGENOM" id="CLU_069937_0_0_1"/>
<dbReference type="InParanoid" id="P42056"/>
<dbReference type="OMA" id="CVEDKIT"/>
<dbReference type="OrthoDB" id="7827681at2759"/>
<dbReference type="Proteomes" id="UP000011115">
    <property type="component" value="Unassembled WGS sequence"/>
</dbReference>
<dbReference type="GO" id="GO:0005741">
    <property type="term" value="C:mitochondrial outer membrane"/>
    <property type="evidence" value="ECO:0000318"/>
    <property type="project" value="GO_Central"/>
</dbReference>
<dbReference type="GO" id="GO:0046930">
    <property type="term" value="C:pore complex"/>
    <property type="evidence" value="ECO:0007669"/>
    <property type="project" value="UniProtKB-KW"/>
</dbReference>
<dbReference type="GO" id="GO:0015288">
    <property type="term" value="F:porin activity"/>
    <property type="evidence" value="ECO:0007669"/>
    <property type="project" value="UniProtKB-KW"/>
</dbReference>
<dbReference type="GO" id="GO:0008308">
    <property type="term" value="F:voltage-gated monoatomic anion channel activity"/>
    <property type="evidence" value="ECO:0000318"/>
    <property type="project" value="GO_Central"/>
</dbReference>
<dbReference type="CDD" id="cd07306">
    <property type="entry name" value="Porin3_VDAC"/>
    <property type="match status" value="1"/>
</dbReference>
<dbReference type="FunFam" id="2.40.160.10:FF:000003">
    <property type="entry name" value="Outer mitochondrial membrane protein porin"/>
    <property type="match status" value="1"/>
</dbReference>
<dbReference type="Gene3D" id="2.40.160.10">
    <property type="entry name" value="Porin"/>
    <property type="match status" value="1"/>
</dbReference>
<dbReference type="InterPro" id="IPR023614">
    <property type="entry name" value="Porin_dom_sf"/>
</dbReference>
<dbReference type="InterPro" id="IPR001925">
    <property type="entry name" value="Porin_Euk"/>
</dbReference>
<dbReference type="InterPro" id="IPR027246">
    <property type="entry name" value="Porin_Euk/Tom40"/>
</dbReference>
<dbReference type="PANTHER" id="PTHR11743:SF70">
    <property type="entry name" value="GH26960P-RELATED"/>
    <property type="match status" value="1"/>
</dbReference>
<dbReference type="PANTHER" id="PTHR11743">
    <property type="entry name" value="VOLTAGE-DEPENDENT ANION-SELECTIVE CHANNEL"/>
    <property type="match status" value="1"/>
</dbReference>
<dbReference type="Pfam" id="PF01459">
    <property type="entry name" value="Porin_3"/>
    <property type="match status" value="1"/>
</dbReference>
<dbReference type="PROSITE" id="PS00558">
    <property type="entry name" value="EUKARYOTIC_PORIN"/>
    <property type="match status" value="1"/>
</dbReference>
<reference key="1">
    <citation type="journal article" date="1994" name="J. Biol. Chem.">
        <title>Biochemical, molecular, and functional characterization of porin isoforms from potato mitochondria.</title>
        <authorList>
            <person name="Heins L."/>
            <person name="Mentzel H."/>
            <person name="Schmid A."/>
            <person name="Benz R."/>
            <person name="Schmitz U.K."/>
        </authorList>
    </citation>
    <scope>NUCLEOTIDE SEQUENCE [MRNA]</scope>
    <scope>PROTEIN SEQUENCE OF 2-23</scope>
    <source>
        <strain>cv. Bintje</strain>
        <tissue>Tuber</tissue>
    </source>
</reference>
<reference key="2">
    <citation type="journal article" date="2011" name="Nature">
        <title>Genome sequence and analysis of the tuber crop potato.</title>
        <authorList>
            <consortium name="The Potato Genome Sequencing Consortium"/>
        </authorList>
    </citation>
    <scope>NUCLEOTIDE SEQUENCE [LARGE SCALE GENOMIC DNA]</scope>
    <source>
        <strain>cv. DM1-3 516 R44</strain>
    </source>
</reference>
<comment type="function">
    <text evidence="1">Forms a channel through the cell membrane that allows diffusion of small hydrophilic molecules. The channel adopts an open conformation at low or zero membrane potential and a closed conformation at potentials above 30-40 mV. The open state has a weak anion selectivity whereas the closed state is cation-selective (By similarity).</text>
</comment>
<comment type="subcellular location">
    <subcellularLocation>
        <location>Mitochondrion outer membrane</location>
    </subcellularLocation>
</comment>
<comment type="domain">
    <text>Consists mainly of membrane-spanning sided beta-sheets.</text>
</comment>
<comment type="similarity">
    <text evidence="3">Belongs to the eukaryotic mitochondrial porin (TC 1.B.8.1) family.</text>
</comment>
<evidence type="ECO:0000250" key="1"/>
<evidence type="ECO:0000269" key="2">
    <source>
    </source>
</evidence>
<evidence type="ECO:0000305" key="3"/>
<feature type="initiator methionine" description="Removed" evidence="2">
    <location>
        <position position="1"/>
    </location>
</feature>
<feature type="chain" id="PRO_0000050532" description="Mitochondrial outer membrane protein porin of 36 kDa">
    <location>
        <begin position="2"/>
        <end position="276"/>
    </location>
</feature>
<feature type="sequence variant">
    <original>T</original>
    <variation>A</variation>
    <location>
        <position position="73"/>
    </location>
</feature>
<accession>P42056</accession>
<organism>
    <name type="scientific">Solanum tuberosum</name>
    <name type="common">Potato</name>
    <dbReference type="NCBI Taxonomy" id="4113"/>
    <lineage>
        <taxon>Eukaryota</taxon>
        <taxon>Viridiplantae</taxon>
        <taxon>Streptophyta</taxon>
        <taxon>Embryophyta</taxon>
        <taxon>Tracheophyta</taxon>
        <taxon>Spermatophyta</taxon>
        <taxon>Magnoliopsida</taxon>
        <taxon>eudicotyledons</taxon>
        <taxon>Gunneridae</taxon>
        <taxon>Pentapetalae</taxon>
        <taxon>asterids</taxon>
        <taxon>lamiids</taxon>
        <taxon>Solanales</taxon>
        <taxon>Solanaceae</taxon>
        <taxon>Solanoideae</taxon>
        <taxon>Solaneae</taxon>
        <taxon>Solanum</taxon>
    </lineage>
</organism>